<dbReference type="EC" id="2.7.11.22"/>
<dbReference type="EMBL" id="X74598">
    <property type="protein sequence ID" value="CAA52676.1"/>
    <property type="molecule type" value="Genomic_DNA"/>
</dbReference>
<dbReference type="PIR" id="S36607">
    <property type="entry name" value="S36607"/>
</dbReference>
<dbReference type="SMR" id="P54665"/>
<dbReference type="OMA" id="QWNSGEE"/>
<dbReference type="BRENDA" id="2.7.11.22">
    <property type="organism ID" value="6520"/>
</dbReference>
<dbReference type="GO" id="GO:0000307">
    <property type="term" value="C:cyclin-dependent protein kinase holoenzyme complex"/>
    <property type="evidence" value="ECO:0007669"/>
    <property type="project" value="TreeGrafter"/>
</dbReference>
<dbReference type="GO" id="GO:0005737">
    <property type="term" value="C:cytoplasm"/>
    <property type="evidence" value="ECO:0007669"/>
    <property type="project" value="TreeGrafter"/>
</dbReference>
<dbReference type="GO" id="GO:0005634">
    <property type="term" value="C:nucleus"/>
    <property type="evidence" value="ECO:0007669"/>
    <property type="project" value="TreeGrafter"/>
</dbReference>
<dbReference type="GO" id="GO:0005524">
    <property type="term" value="F:ATP binding"/>
    <property type="evidence" value="ECO:0007669"/>
    <property type="project" value="UniProtKB-KW"/>
</dbReference>
<dbReference type="GO" id="GO:0030332">
    <property type="term" value="F:cyclin binding"/>
    <property type="evidence" value="ECO:0007669"/>
    <property type="project" value="TreeGrafter"/>
</dbReference>
<dbReference type="GO" id="GO:0004693">
    <property type="term" value="F:cyclin-dependent protein serine/threonine kinase activity"/>
    <property type="evidence" value="ECO:0007669"/>
    <property type="project" value="UniProtKB-EC"/>
</dbReference>
<dbReference type="GO" id="GO:0106310">
    <property type="term" value="F:protein serine kinase activity"/>
    <property type="evidence" value="ECO:0007669"/>
    <property type="project" value="RHEA"/>
</dbReference>
<dbReference type="GO" id="GO:0000082">
    <property type="term" value="P:G1/S transition of mitotic cell cycle"/>
    <property type="evidence" value="ECO:0007669"/>
    <property type="project" value="TreeGrafter"/>
</dbReference>
<dbReference type="GO" id="GO:0010389">
    <property type="term" value="P:regulation of G2/M transition of mitotic cell cycle"/>
    <property type="evidence" value="ECO:0007669"/>
    <property type="project" value="TreeGrafter"/>
</dbReference>
<dbReference type="GO" id="GO:0010468">
    <property type="term" value="P:regulation of gene expression"/>
    <property type="evidence" value="ECO:0007669"/>
    <property type="project" value="TreeGrafter"/>
</dbReference>
<dbReference type="GO" id="GO:0007165">
    <property type="term" value="P:signal transduction"/>
    <property type="evidence" value="ECO:0007669"/>
    <property type="project" value="TreeGrafter"/>
</dbReference>
<dbReference type="CDD" id="cd07829">
    <property type="entry name" value="STKc_CDK_like"/>
    <property type="match status" value="1"/>
</dbReference>
<dbReference type="FunFam" id="3.30.200.20:FF:000396">
    <property type="entry name" value="Cdc2-related kinase 2, putative"/>
    <property type="match status" value="1"/>
</dbReference>
<dbReference type="FunFam" id="1.10.510.10:FF:000574">
    <property type="entry name" value="Cell division related protein kinase 2"/>
    <property type="match status" value="1"/>
</dbReference>
<dbReference type="Gene3D" id="3.30.200.20">
    <property type="entry name" value="Phosphorylase Kinase, domain 1"/>
    <property type="match status" value="1"/>
</dbReference>
<dbReference type="Gene3D" id="1.10.510.10">
    <property type="entry name" value="Transferase(Phosphotransferase) domain 1"/>
    <property type="match status" value="1"/>
</dbReference>
<dbReference type="InterPro" id="IPR050108">
    <property type="entry name" value="CDK"/>
</dbReference>
<dbReference type="InterPro" id="IPR011009">
    <property type="entry name" value="Kinase-like_dom_sf"/>
</dbReference>
<dbReference type="InterPro" id="IPR000719">
    <property type="entry name" value="Prot_kinase_dom"/>
</dbReference>
<dbReference type="InterPro" id="IPR017441">
    <property type="entry name" value="Protein_kinase_ATP_BS"/>
</dbReference>
<dbReference type="InterPro" id="IPR008271">
    <property type="entry name" value="Ser/Thr_kinase_AS"/>
</dbReference>
<dbReference type="PANTHER" id="PTHR24056:SF527">
    <property type="entry name" value="CELL DIVISION CONTROL PROTEIN 2 HOMOLOG 2"/>
    <property type="match status" value="1"/>
</dbReference>
<dbReference type="PANTHER" id="PTHR24056">
    <property type="entry name" value="CELL DIVISION PROTEIN KINASE"/>
    <property type="match status" value="1"/>
</dbReference>
<dbReference type="Pfam" id="PF00069">
    <property type="entry name" value="Pkinase"/>
    <property type="match status" value="1"/>
</dbReference>
<dbReference type="SMART" id="SM00220">
    <property type="entry name" value="S_TKc"/>
    <property type="match status" value="1"/>
</dbReference>
<dbReference type="SUPFAM" id="SSF56112">
    <property type="entry name" value="Protein kinase-like (PK-like)"/>
    <property type="match status" value="1"/>
</dbReference>
<dbReference type="PROSITE" id="PS00107">
    <property type="entry name" value="PROTEIN_KINASE_ATP"/>
    <property type="match status" value="1"/>
</dbReference>
<dbReference type="PROSITE" id="PS50011">
    <property type="entry name" value="PROTEIN_KINASE_DOM"/>
    <property type="match status" value="1"/>
</dbReference>
<dbReference type="PROSITE" id="PS00108">
    <property type="entry name" value="PROTEIN_KINASE_ST"/>
    <property type="match status" value="1"/>
</dbReference>
<accession>P54665</accession>
<name>CC2H2_TRYBB</name>
<gene>
    <name type="primary">CRK2</name>
</gene>
<proteinExistence type="inferred from homology"/>
<comment type="function">
    <text>Probably involved in the control of the cell cycle.</text>
</comment>
<comment type="catalytic activity">
    <reaction>
        <text>L-seryl-[protein] + ATP = O-phospho-L-seryl-[protein] + ADP + H(+)</text>
        <dbReference type="Rhea" id="RHEA:17989"/>
        <dbReference type="Rhea" id="RHEA-COMP:9863"/>
        <dbReference type="Rhea" id="RHEA-COMP:11604"/>
        <dbReference type="ChEBI" id="CHEBI:15378"/>
        <dbReference type="ChEBI" id="CHEBI:29999"/>
        <dbReference type="ChEBI" id="CHEBI:30616"/>
        <dbReference type="ChEBI" id="CHEBI:83421"/>
        <dbReference type="ChEBI" id="CHEBI:456216"/>
        <dbReference type="EC" id="2.7.11.22"/>
    </reaction>
</comment>
<comment type="catalytic activity">
    <reaction>
        <text>L-threonyl-[protein] + ATP = O-phospho-L-threonyl-[protein] + ADP + H(+)</text>
        <dbReference type="Rhea" id="RHEA:46608"/>
        <dbReference type="Rhea" id="RHEA-COMP:11060"/>
        <dbReference type="Rhea" id="RHEA-COMP:11605"/>
        <dbReference type="ChEBI" id="CHEBI:15378"/>
        <dbReference type="ChEBI" id="CHEBI:30013"/>
        <dbReference type="ChEBI" id="CHEBI:30616"/>
        <dbReference type="ChEBI" id="CHEBI:61977"/>
        <dbReference type="ChEBI" id="CHEBI:456216"/>
        <dbReference type="EC" id="2.7.11.22"/>
    </reaction>
</comment>
<comment type="activity regulation">
    <text evidence="1">Phosphorylation at Ser-56 or Tyr-57 inactivates the enzyme.</text>
</comment>
<comment type="subunit">
    <text evidence="1">Forms a stable but non-covalent complex with a regulatory subunit and with a cyclin.</text>
</comment>
<comment type="similarity">
    <text evidence="5">Belongs to the protein kinase superfamily. CMGC Ser/Thr protein kinase family. CDC2/CDKX subfamily.</text>
</comment>
<sequence>MQVQVQEGQTACDGSLRPLPSAGPASFVPRSLRPAPLRGTSTPDRYSRIEKVGEGSYGIVYKCHDNFTGRTVAMKRIPLIVNDGGVPSTAVREVSLLRELNHPYVVRLLDVVLHEAKLLLIFEYMEQDLQGMLKQRNTAFVGGKLRRIMFQLLLGLHECHSRRFVHRDIKPSNILIDRKESVVKLADFGLGRAFRVPLQTYTTEVMTLWYRAPEVLLGDKQYLPAVDVWSMGCVFAELARRRSLFAGDTAINQLFSIFQLLGTPTEATWRGVTSLPHHNVNFPRWTAKPLRTAVPALDDDGVDLLRRMLCYNPRERITAYEALQHSYFDEVREEEVEKLMRFNGA</sequence>
<keyword id="KW-0067">ATP-binding</keyword>
<keyword id="KW-0418">Kinase</keyword>
<keyword id="KW-0547">Nucleotide-binding</keyword>
<keyword id="KW-0597">Phosphoprotein</keyword>
<keyword id="KW-0723">Serine/threonine-protein kinase</keyword>
<keyword id="KW-0808">Transferase</keyword>
<organism>
    <name type="scientific">Trypanosoma brucei brucei</name>
    <dbReference type="NCBI Taxonomy" id="5702"/>
    <lineage>
        <taxon>Eukaryota</taxon>
        <taxon>Discoba</taxon>
        <taxon>Euglenozoa</taxon>
        <taxon>Kinetoplastea</taxon>
        <taxon>Metakinetoplastina</taxon>
        <taxon>Trypanosomatida</taxon>
        <taxon>Trypanosomatidae</taxon>
        <taxon>Trypanosoma</taxon>
    </lineage>
</organism>
<protein>
    <recommendedName>
        <fullName>Cell division control protein 2 homolog 2</fullName>
        <ecNumber>2.7.11.22</ecNumber>
    </recommendedName>
</protein>
<feature type="chain" id="PRO_0000085708" description="Cell division control protein 2 homolog 2">
    <location>
        <begin position="1"/>
        <end position="345"/>
    </location>
</feature>
<feature type="domain" description="Protein kinase" evidence="2">
    <location>
        <begin position="46"/>
        <end position="328"/>
    </location>
</feature>
<feature type="region of interest" description="Disordered" evidence="4">
    <location>
        <begin position="1"/>
        <end position="44"/>
    </location>
</feature>
<feature type="active site" description="Proton acceptor" evidence="2 3">
    <location>
        <position position="168"/>
    </location>
</feature>
<feature type="binding site" evidence="2">
    <location>
        <begin position="52"/>
        <end position="60"/>
    </location>
    <ligand>
        <name>ATP</name>
        <dbReference type="ChEBI" id="CHEBI:30616"/>
    </ligand>
</feature>
<feature type="binding site" evidence="2">
    <location>
        <position position="75"/>
    </location>
    <ligand>
        <name>ATP</name>
        <dbReference type="ChEBI" id="CHEBI:30616"/>
    </ligand>
</feature>
<feature type="modified residue" description="Phosphoserine" evidence="1">
    <location>
        <position position="56"/>
    </location>
</feature>
<feature type="modified residue" description="Phosphotyrosine" evidence="1">
    <location>
        <position position="57"/>
    </location>
</feature>
<evidence type="ECO:0000250" key="1"/>
<evidence type="ECO:0000255" key="2">
    <source>
        <dbReference type="PROSITE-ProRule" id="PRU00159"/>
    </source>
</evidence>
<evidence type="ECO:0000255" key="3">
    <source>
        <dbReference type="PROSITE-ProRule" id="PRU10027"/>
    </source>
</evidence>
<evidence type="ECO:0000256" key="4">
    <source>
        <dbReference type="SAM" id="MobiDB-lite"/>
    </source>
</evidence>
<evidence type="ECO:0000305" key="5"/>
<reference key="1">
    <citation type="journal article" date="1995" name="Gene">
        <title>A family of trypanosome cdc2-related protein kinases.</title>
        <authorList>
            <person name="Mottram J."/>
            <person name="Smith G."/>
        </authorList>
    </citation>
    <scope>NUCLEOTIDE SEQUENCE [GENOMIC DNA]</scope>
    <source>
        <strain>ISTAT</strain>
    </source>
</reference>